<evidence type="ECO:0000255" key="1">
    <source>
        <dbReference type="HAMAP-Rule" id="MF_01342"/>
    </source>
</evidence>
<evidence type="ECO:0000305" key="2"/>
<sequence>MLQPTRLKYRKQQKGRNTGIATRGNKVSFGEFGLKAVGRGRLTARQIEAARRAMTRHIKRGGRIWIRVFPDKPITEKPIQVRMGGGKGNVEYYIAEIKPGKVLYEMDGVPEELAREAFELAAAKLPIPTTFVVRQVGQ</sequence>
<keyword id="KW-0687">Ribonucleoprotein</keyword>
<keyword id="KW-0689">Ribosomal protein</keyword>
<keyword id="KW-0694">RNA-binding</keyword>
<keyword id="KW-0699">rRNA-binding</keyword>
<keyword id="KW-0820">tRNA-binding</keyword>
<organism>
    <name type="scientific">Neisseria meningitidis serogroup C / serotype 2a (strain ATCC 700532 / DSM 15464 / FAM18)</name>
    <dbReference type="NCBI Taxonomy" id="272831"/>
    <lineage>
        <taxon>Bacteria</taxon>
        <taxon>Pseudomonadati</taxon>
        <taxon>Pseudomonadota</taxon>
        <taxon>Betaproteobacteria</taxon>
        <taxon>Neisseriales</taxon>
        <taxon>Neisseriaceae</taxon>
        <taxon>Neisseria</taxon>
    </lineage>
</organism>
<gene>
    <name evidence="1" type="primary">rplP</name>
    <name type="ordered locus">NMC0139</name>
</gene>
<proteinExistence type="inferred from homology"/>
<accession>A1KRI0</accession>
<protein>
    <recommendedName>
        <fullName evidence="1">Large ribosomal subunit protein uL16</fullName>
    </recommendedName>
    <alternativeName>
        <fullName evidence="2">50S ribosomal protein L16</fullName>
    </alternativeName>
</protein>
<name>RL16_NEIMF</name>
<comment type="function">
    <text evidence="1">Binds 23S rRNA and is also seen to make contacts with the A and possibly P site tRNAs.</text>
</comment>
<comment type="subunit">
    <text evidence="1">Part of the 50S ribosomal subunit.</text>
</comment>
<comment type="similarity">
    <text evidence="1">Belongs to the universal ribosomal protein uL16 family.</text>
</comment>
<dbReference type="EMBL" id="AM421808">
    <property type="protein sequence ID" value="CAM09458.1"/>
    <property type="molecule type" value="Genomic_DNA"/>
</dbReference>
<dbReference type="RefSeq" id="WP_002215430.1">
    <property type="nucleotide sequence ID" value="NC_008767.1"/>
</dbReference>
<dbReference type="SMR" id="A1KRI0"/>
<dbReference type="GeneID" id="93387224"/>
<dbReference type="KEGG" id="nmc:NMC0139"/>
<dbReference type="HOGENOM" id="CLU_078858_2_1_4"/>
<dbReference type="Proteomes" id="UP000002286">
    <property type="component" value="Chromosome"/>
</dbReference>
<dbReference type="GO" id="GO:0022625">
    <property type="term" value="C:cytosolic large ribosomal subunit"/>
    <property type="evidence" value="ECO:0007669"/>
    <property type="project" value="TreeGrafter"/>
</dbReference>
<dbReference type="GO" id="GO:0019843">
    <property type="term" value="F:rRNA binding"/>
    <property type="evidence" value="ECO:0007669"/>
    <property type="project" value="UniProtKB-UniRule"/>
</dbReference>
<dbReference type="GO" id="GO:0003735">
    <property type="term" value="F:structural constituent of ribosome"/>
    <property type="evidence" value="ECO:0007669"/>
    <property type="project" value="InterPro"/>
</dbReference>
<dbReference type="GO" id="GO:0000049">
    <property type="term" value="F:tRNA binding"/>
    <property type="evidence" value="ECO:0007669"/>
    <property type="project" value="UniProtKB-KW"/>
</dbReference>
<dbReference type="GO" id="GO:0006412">
    <property type="term" value="P:translation"/>
    <property type="evidence" value="ECO:0007669"/>
    <property type="project" value="UniProtKB-UniRule"/>
</dbReference>
<dbReference type="CDD" id="cd01433">
    <property type="entry name" value="Ribosomal_L16_L10e"/>
    <property type="match status" value="1"/>
</dbReference>
<dbReference type="FunFam" id="3.90.1170.10:FF:000001">
    <property type="entry name" value="50S ribosomal protein L16"/>
    <property type="match status" value="1"/>
</dbReference>
<dbReference type="Gene3D" id="3.90.1170.10">
    <property type="entry name" value="Ribosomal protein L10e/L16"/>
    <property type="match status" value="1"/>
</dbReference>
<dbReference type="HAMAP" id="MF_01342">
    <property type="entry name" value="Ribosomal_uL16"/>
    <property type="match status" value="1"/>
</dbReference>
<dbReference type="InterPro" id="IPR047873">
    <property type="entry name" value="Ribosomal_uL16"/>
</dbReference>
<dbReference type="InterPro" id="IPR000114">
    <property type="entry name" value="Ribosomal_uL16_bact-type"/>
</dbReference>
<dbReference type="InterPro" id="IPR020798">
    <property type="entry name" value="Ribosomal_uL16_CS"/>
</dbReference>
<dbReference type="InterPro" id="IPR016180">
    <property type="entry name" value="Ribosomal_uL16_dom"/>
</dbReference>
<dbReference type="InterPro" id="IPR036920">
    <property type="entry name" value="Ribosomal_uL16_sf"/>
</dbReference>
<dbReference type="NCBIfam" id="TIGR01164">
    <property type="entry name" value="rplP_bact"/>
    <property type="match status" value="1"/>
</dbReference>
<dbReference type="PANTHER" id="PTHR12220">
    <property type="entry name" value="50S/60S RIBOSOMAL PROTEIN L16"/>
    <property type="match status" value="1"/>
</dbReference>
<dbReference type="PANTHER" id="PTHR12220:SF13">
    <property type="entry name" value="LARGE RIBOSOMAL SUBUNIT PROTEIN UL16M"/>
    <property type="match status" value="1"/>
</dbReference>
<dbReference type="Pfam" id="PF00252">
    <property type="entry name" value="Ribosomal_L16"/>
    <property type="match status" value="1"/>
</dbReference>
<dbReference type="PRINTS" id="PR00060">
    <property type="entry name" value="RIBOSOMALL16"/>
</dbReference>
<dbReference type="SUPFAM" id="SSF54686">
    <property type="entry name" value="Ribosomal protein L16p/L10e"/>
    <property type="match status" value="1"/>
</dbReference>
<dbReference type="PROSITE" id="PS00586">
    <property type="entry name" value="RIBOSOMAL_L16_1"/>
    <property type="match status" value="1"/>
</dbReference>
<reference key="1">
    <citation type="journal article" date="2007" name="PLoS Genet.">
        <title>Meningococcal genetic variation mechanisms viewed through comparative analysis of serogroup C strain FAM18.</title>
        <authorList>
            <person name="Bentley S.D."/>
            <person name="Vernikos G.S."/>
            <person name="Snyder L.A.S."/>
            <person name="Churcher C."/>
            <person name="Arrowsmith C."/>
            <person name="Chillingworth T."/>
            <person name="Cronin A."/>
            <person name="Davis P.H."/>
            <person name="Holroyd N.E."/>
            <person name="Jagels K."/>
            <person name="Maddison M."/>
            <person name="Moule S."/>
            <person name="Rabbinowitsch E."/>
            <person name="Sharp S."/>
            <person name="Unwin L."/>
            <person name="Whitehead S."/>
            <person name="Quail M.A."/>
            <person name="Achtman M."/>
            <person name="Barrell B.G."/>
            <person name="Saunders N.J."/>
            <person name="Parkhill J."/>
        </authorList>
    </citation>
    <scope>NUCLEOTIDE SEQUENCE [LARGE SCALE GENOMIC DNA]</scope>
    <source>
        <strain>ATCC 700532 / DSM 15464 / FAM18</strain>
    </source>
</reference>
<feature type="chain" id="PRO_1000054661" description="Large ribosomal subunit protein uL16">
    <location>
        <begin position="1"/>
        <end position="138"/>
    </location>
</feature>